<dbReference type="EC" id="4.1.1.23" evidence="1"/>
<dbReference type="EMBL" id="CP000967">
    <property type="protein sequence ID" value="ACD56911.1"/>
    <property type="molecule type" value="Genomic_DNA"/>
</dbReference>
<dbReference type="RefSeq" id="WP_011257215.1">
    <property type="nucleotide sequence ID" value="NC_010717.2"/>
</dbReference>
<dbReference type="SMR" id="B2SHJ1"/>
<dbReference type="KEGG" id="xop:PXO_03614"/>
<dbReference type="eggNOG" id="COG0284">
    <property type="taxonomic scope" value="Bacteria"/>
</dbReference>
<dbReference type="HOGENOM" id="CLU_067069_1_0_6"/>
<dbReference type="UniPathway" id="UPA00070">
    <property type="reaction ID" value="UER00120"/>
</dbReference>
<dbReference type="Proteomes" id="UP000001740">
    <property type="component" value="Chromosome"/>
</dbReference>
<dbReference type="GO" id="GO:0005829">
    <property type="term" value="C:cytosol"/>
    <property type="evidence" value="ECO:0007669"/>
    <property type="project" value="TreeGrafter"/>
</dbReference>
<dbReference type="GO" id="GO:0004590">
    <property type="term" value="F:orotidine-5'-phosphate decarboxylase activity"/>
    <property type="evidence" value="ECO:0007669"/>
    <property type="project" value="UniProtKB-UniRule"/>
</dbReference>
<dbReference type="GO" id="GO:0006207">
    <property type="term" value="P:'de novo' pyrimidine nucleobase biosynthetic process"/>
    <property type="evidence" value="ECO:0007669"/>
    <property type="project" value="InterPro"/>
</dbReference>
<dbReference type="GO" id="GO:0044205">
    <property type="term" value="P:'de novo' UMP biosynthetic process"/>
    <property type="evidence" value="ECO:0007669"/>
    <property type="project" value="UniProtKB-UniRule"/>
</dbReference>
<dbReference type="CDD" id="cd04725">
    <property type="entry name" value="OMP_decarboxylase_like"/>
    <property type="match status" value="1"/>
</dbReference>
<dbReference type="FunFam" id="3.20.20.70:FF:000235">
    <property type="entry name" value="Orotidine 5'-phosphate decarboxylase"/>
    <property type="match status" value="1"/>
</dbReference>
<dbReference type="Gene3D" id="3.20.20.70">
    <property type="entry name" value="Aldolase class I"/>
    <property type="match status" value="1"/>
</dbReference>
<dbReference type="HAMAP" id="MF_01200_B">
    <property type="entry name" value="OMPdecase_type1_B"/>
    <property type="match status" value="1"/>
</dbReference>
<dbReference type="InterPro" id="IPR013785">
    <property type="entry name" value="Aldolase_TIM"/>
</dbReference>
<dbReference type="InterPro" id="IPR014732">
    <property type="entry name" value="OMPdecase"/>
</dbReference>
<dbReference type="InterPro" id="IPR018089">
    <property type="entry name" value="OMPdecase_AS"/>
</dbReference>
<dbReference type="InterPro" id="IPR047596">
    <property type="entry name" value="OMPdecase_bac"/>
</dbReference>
<dbReference type="InterPro" id="IPR001754">
    <property type="entry name" value="OMPdeCOase_dom"/>
</dbReference>
<dbReference type="InterPro" id="IPR011060">
    <property type="entry name" value="RibuloseP-bd_barrel"/>
</dbReference>
<dbReference type="NCBIfam" id="NF001273">
    <property type="entry name" value="PRK00230.1"/>
    <property type="match status" value="1"/>
</dbReference>
<dbReference type="NCBIfam" id="TIGR01740">
    <property type="entry name" value="pyrF"/>
    <property type="match status" value="1"/>
</dbReference>
<dbReference type="PANTHER" id="PTHR32119">
    <property type="entry name" value="OROTIDINE 5'-PHOSPHATE DECARBOXYLASE"/>
    <property type="match status" value="1"/>
</dbReference>
<dbReference type="PANTHER" id="PTHR32119:SF2">
    <property type="entry name" value="OROTIDINE 5'-PHOSPHATE DECARBOXYLASE"/>
    <property type="match status" value="1"/>
</dbReference>
<dbReference type="Pfam" id="PF00215">
    <property type="entry name" value="OMPdecase"/>
    <property type="match status" value="1"/>
</dbReference>
<dbReference type="SMART" id="SM00934">
    <property type="entry name" value="OMPdecase"/>
    <property type="match status" value="1"/>
</dbReference>
<dbReference type="SUPFAM" id="SSF51366">
    <property type="entry name" value="Ribulose-phoshate binding barrel"/>
    <property type="match status" value="1"/>
</dbReference>
<dbReference type="PROSITE" id="PS00156">
    <property type="entry name" value="OMPDECASE"/>
    <property type="match status" value="1"/>
</dbReference>
<evidence type="ECO:0000255" key="1">
    <source>
        <dbReference type="HAMAP-Rule" id="MF_01200"/>
    </source>
</evidence>
<sequence length="243" mass="25502">MSRAPLPLAAHERLIFALDVPSHDEAIAWVDRLGDSVAFYKIGMELLASGEYFHVLDALAKRDKRVFVDLKFFDIPATVAGTIRRLAQWPVSYCTVHGWHAGMLQAAADANHGAMRLLAVTVLTSMGRPDLAAMGIDREPVDVVVERALAAEAAGIDGVIASGQEAGPIRRATGPAFSIVCPGIRPGGPVADDQQRIVGVAQAFTDGADAIVVGRPIRLAADPAAAAAAIQAEILAAVGQDRS</sequence>
<comment type="function">
    <text evidence="1">Catalyzes the decarboxylation of orotidine 5'-monophosphate (OMP) to uridine 5'-monophosphate (UMP).</text>
</comment>
<comment type="catalytic activity">
    <reaction evidence="1">
        <text>orotidine 5'-phosphate + H(+) = UMP + CO2</text>
        <dbReference type="Rhea" id="RHEA:11596"/>
        <dbReference type="ChEBI" id="CHEBI:15378"/>
        <dbReference type="ChEBI" id="CHEBI:16526"/>
        <dbReference type="ChEBI" id="CHEBI:57538"/>
        <dbReference type="ChEBI" id="CHEBI:57865"/>
        <dbReference type="EC" id="4.1.1.23"/>
    </reaction>
</comment>
<comment type="pathway">
    <text evidence="1">Pyrimidine metabolism; UMP biosynthesis via de novo pathway; UMP from orotate: step 2/2.</text>
</comment>
<comment type="subunit">
    <text evidence="1">Homodimer.</text>
</comment>
<comment type="similarity">
    <text evidence="1">Belongs to the OMP decarboxylase family. Type 1 subfamily.</text>
</comment>
<proteinExistence type="inferred from homology"/>
<accession>B2SHJ1</accession>
<protein>
    <recommendedName>
        <fullName evidence="1">Orotidine 5'-phosphate decarboxylase</fullName>
        <ecNumber evidence="1">4.1.1.23</ecNumber>
    </recommendedName>
    <alternativeName>
        <fullName evidence="1">OMP decarboxylase</fullName>
        <shortName evidence="1">OMPDCase</shortName>
        <shortName evidence="1">OMPdecase</shortName>
    </alternativeName>
</protein>
<keyword id="KW-0210">Decarboxylase</keyword>
<keyword id="KW-0456">Lyase</keyword>
<keyword id="KW-0665">Pyrimidine biosynthesis</keyword>
<reference key="1">
    <citation type="journal article" date="2008" name="BMC Genomics">
        <title>Genome sequence and rapid evolution of the rice pathogen Xanthomonas oryzae pv. oryzae PXO99A.</title>
        <authorList>
            <person name="Salzberg S.L."/>
            <person name="Sommer D.D."/>
            <person name="Schatz M.C."/>
            <person name="Phillippy A.M."/>
            <person name="Rabinowicz P.D."/>
            <person name="Tsuge S."/>
            <person name="Furutani A."/>
            <person name="Ochiai H."/>
            <person name="Delcher A.L."/>
            <person name="Kelley D."/>
            <person name="Madupu R."/>
            <person name="Puiu D."/>
            <person name="Radune D."/>
            <person name="Shumway M."/>
            <person name="Trapnell C."/>
            <person name="Aparna G."/>
            <person name="Jha G."/>
            <person name="Pandey A."/>
            <person name="Patil P.B."/>
            <person name="Ishihara H."/>
            <person name="Meyer D.F."/>
            <person name="Szurek B."/>
            <person name="Verdier V."/>
            <person name="Koebnik R."/>
            <person name="Dow J.M."/>
            <person name="Ryan R.P."/>
            <person name="Hirata H."/>
            <person name="Tsuyumu S."/>
            <person name="Won Lee S."/>
            <person name="Seo Y.-S."/>
            <person name="Sriariyanum M."/>
            <person name="Ronald P.C."/>
            <person name="Sonti R.V."/>
            <person name="Van Sluys M.-A."/>
            <person name="Leach J.E."/>
            <person name="White F.F."/>
            <person name="Bogdanove A.J."/>
        </authorList>
    </citation>
    <scope>NUCLEOTIDE SEQUENCE [LARGE SCALE GENOMIC DNA]</scope>
    <source>
        <strain>PXO99A</strain>
    </source>
</reference>
<organism>
    <name type="scientific">Xanthomonas oryzae pv. oryzae (strain PXO99A)</name>
    <dbReference type="NCBI Taxonomy" id="360094"/>
    <lineage>
        <taxon>Bacteria</taxon>
        <taxon>Pseudomonadati</taxon>
        <taxon>Pseudomonadota</taxon>
        <taxon>Gammaproteobacteria</taxon>
        <taxon>Lysobacterales</taxon>
        <taxon>Lysobacteraceae</taxon>
        <taxon>Xanthomonas</taxon>
    </lineage>
</organism>
<feature type="chain" id="PRO_1000138571" description="Orotidine 5'-phosphate decarboxylase">
    <location>
        <begin position="1"/>
        <end position="243"/>
    </location>
</feature>
<feature type="active site" description="Proton donor" evidence="1">
    <location>
        <position position="71"/>
    </location>
</feature>
<feature type="binding site" evidence="1">
    <location>
        <position position="19"/>
    </location>
    <ligand>
        <name>substrate</name>
    </ligand>
</feature>
<feature type="binding site" evidence="1">
    <location>
        <position position="41"/>
    </location>
    <ligand>
        <name>substrate</name>
    </ligand>
</feature>
<feature type="binding site" evidence="1">
    <location>
        <begin position="69"/>
        <end position="78"/>
    </location>
    <ligand>
        <name>substrate</name>
    </ligand>
</feature>
<feature type="binding site" evidence="1">
    <location>
        <position position="124"/>
    </location>
    <ligand>
        <name>substrate</name>
    </ligand>
</feature>
<feature type="binding site" evidence="1">
    <location>
        <position position="185"/>
    </location>
    <ligand>
        <name>substrate</name>
    </ligand>
</feature>
<feature type="binding site" evidence="1">
    <location>
        <position position="194"/>
    </location>
    <ligand>
        <name>substrate</name>
    </ligand>
</feature>
<feature type="binding site" evidence="1">
    <location>
        <position position="214"/>
    </location>
    <ligand>
        <name>substrate</name>
    </ligand>
</feature>
<feature type="binding site" evidence="1">
    <location>
        <position position="215"/>
    </location>
    <ligand>
        <name>substrate</name>
    </ligand>
</feature>
<gene>
    <name evidence="1" type="primary">pyrF</name>
    <name type="ordered locus">PXO_03614</name>
</gene>
<name>PYRF_XANOP</name>